<proteinExistence type="inferred from homology"/>
<gene>
    <name type="primary">CYT1</name>
    <name type="ordered locus">KLLA0F16555g</name>
</gene>
<dbReference type="EC" id="7.1.1.8"/>
<dbReference type="EMBL" id="X95899">
    <property type="protein sequence ID" value="CAA65144.1"/>
    <property type="molecule type" value="Genomic_DNA"/>
</dbReference>
<dbReference type="EMBL" id="CR382126">
    <property type="protein sequence ID" value="CAG98532.1"/>
    <property type="molecule type" value="Genomic_DNA"/>
</dbReference>
<dbReference type="PIR" id="S72323">
    <property type="entry name" value="S72323"/>
</dbReference>
<dbReference type="RefSeq" id="XP_455824.1">
    <property type="nucleotide sequence ID" value="XM_455824.1"/>
</dbReference>
<dbReference type="SMR" id="Q00988"/>
<dbReference type="FunCoup" id="Q00988">
    <property type="interactions" value="726"/>
</dbReference>
<dbReference type="STRING" id="284590.Q00988"/>
<dbReference type="PaxDb" id="284590-Q00988"/>
<dbReference type="KEGG" id="kla:KLLA0_F16555g"/>
<dbReference type="eggNOG" id="KOG3052">
    <property type="taxonomic scope" value="Eukaryota"/>
</dbReference>
<dbReference type="HOGENOM" id="CLU_040334_1_1_1"/>
<dbReference type="InParanoid" id="Q00988"/>
<dbReference type="OMA" id="WVKKFKW"/>
<dbReference type="Proteomes" id="UP000000598">
    <property type="component" value="Chromosome F"/>
</dbReference>
<dbReference type="GO" id="GO:0005743">
    <property type="term" value="C:mitochondrial inner membrane"/>
    <property type="evidence" value="ECO:0007669"/>
    <property type="project" value="UniProtKB-SubCell"/>
</dbReference>
<dbReference type="GO" id="GO:0020037">
    <property type="term" value="F:heme binding"/>
    <property type="evidence" value="ECO:0007669"/>
    <property type="project" value="InterPro"/>
</dbReference>
<dbReference type="GO" id="GO:0046872">
    <property type="term" value="F:metal ion binding"/>
    <property type="evidence" value="ECO:0007669"/>
    <property type="project" value="UniProtKB-KW"/>
</dbReference>
<dbReference type="GO" id="GO:0008121">
    <property type="term" value="F:ubiquinol-cytochrome-c reductase activity"/>
    <property type="evidence" value="ECO:0007669"/>
    <property type="project" value="UniProtKB-EC"/>
</dbReference>
<dbReference type="GO" id="GO:0006122">
    <property type="term" value="P:mitochondrial electron transport, ubiquinol to cytochrome c"/>
    <property type="evidence" value="ECO:0007669"/>
    <property type="project" value="TreeGrafter"/>
</dbReference>
<dbReference type="FunFam" id="1.10.760.10:FF:000002">
    <property type="entry name" value="Cytochrome c1, heme protein"/>
    <property type="match status" value="1"/>
</dbReference>
<dbReference type="FunFam" id="1.20.5.100:FF:000003">
    <property type="entry name" value="Cytochrome c1, heme protein, mitochondrial"/>
    <property type="match status" value="1"/>
</dbReference>
<dbReference type="Gene3D" id="1.10.760.10">
    <property type="entry name" value="Cytochrome c-like domain"/>
    <property type="match status" value="1"/>
</dbReference>
<dbReference type="Gene3D" id="1.20.5.100">
    <property type="entry name" value="Cytochrome c1, transmembrane anchor, C-terminal"/>
    <property type="match status" value="1"/>
</dbReference>
<dbReference type="InterPro" id="IPR009056">
    <property type="entry name" value="Cyt_c-like_dom"/>
</dbReference>
<dbReference type="InterPro" id="IPR036909">
    <property type="entry name" value="Cyt_c-like_dom_sf"/>
</dbReference>
<dbReference type="InterPro" id="IPR002326">
    <property type="entry name" value="Cyt_c1"/>
</dbReference>
<dbReference type="InterPro" id="IPR021157">
    <property type="entry name" value="Cyt_c1_TM_anchor_C"/>
</dbReference>
<dbReference type="PANTHER" id="PTHR10266">
    <property type="entry name" value="CYTOCHROME C1"/>
    <property type="match status" value="1"/>
</dbReference>
<dbReference type="PANTHER" id="PTHR10266:SF3">
    <property type="entry name" value="CYTOCHROME C1, HEME PROTEIN, MITOCHONDRIAL"/>
    <property type="match status" value="1"/>
</dbReference>
<dbReference type="Pfam" id="PF02167">
    <property type="entry name" value="Cytochrom_C1"/>
    <property type="match status" value="1"/>
</dbReference>
<dbReference type="PRINTS" id="PR00603">
    <property type="entry name" value="CYTOCHROMEC1"/>
</dbReference>
<dbReference type="SUPFAM" id="SSF46626">
    <property type="entry name" value="Cytochrome c"/>
    <property type="match status" value="1"/>
</dbReference>
<dbReference type="SUPFAM" id="SSF81496">
    <property type="entry name" value="Cytochrome c1 subunit of cytochrome bc1 complex (Ubiquinol-cytochrome c reductase), transmembrane anchor"/>
    <property type="match status" value="1"/>
</dbReference>
<dbReference type="PROSITE" id="PS51007">
    <property type="entry name" value="CYTC"/>
    <property type="match status" value="1"/>
</dbReference>
<sequence length="292" mass="31947">MFRSFSTAAKQAVKGTYVQRAIVGGAAVVGIGASTMLYADSLTADAMTAAEHGLHAPGYGWSHNGPLETFDHSSIRRGYQVYREVCAACHSLDRVAWRTMVGVSHTNAEVRAMAEEFEYDDEPDDQGNPKKRPGKLADYVPGPYPNEQAARAANQGALPPDLSLIVKARHGGPDYIFALLTGYPEEPPAGVVLPPGANYNPYFPGGSIAMGRVLFDDLVEYEDGTPATTSQMAKDVTTFLHWCSEPEHDERKRLGLKAMIVLSSLYLLSVWVKKFKWASIKSRKIVFNPPKK</sequence>
<organism>
    <name type="scientific">Kluyveromyces lactis (strain ATCC 8585 / CBS 2359 / DSM 70799 / NBRC 1267 / NRRL Y-1140 / WM37)</name>
    <name type="common">Yeast</name>
    <name type="synonym">Candida sphaerica</name>
    <dbReference type="NCBI Taxonomy" id="284590"/>
    <lineage>
        <taxon>Eukaryota</taxon>
        <taxon>Fungi</taxon>
        <taxon>Dikarya</taxon>
        <taxon>Ascomycota</taxon>
        <taxon>Saccharomycotina</taxon>
        <taxon>Saccharomycetes</taxon>
        <taxon>Saccharomycetales</taxon>
        <taxon>Saccharomycetaceae</taxon>
        <taxon>Kluyveromyces</taxon>
    </lineage>
</organism>
<protein>
    <recommendedName>
        <fullName>Cytochrome c1, heme protein, mitochondrial</fullName>
        <ecNumber>7.1.1.8</ecNumber>
    </recommendedName>
    <alternativeName>
        <fullName>Complex III subunit 4</fullName>
    </alternativeName>
    <alternativeName>
        <fullName>Complex III subunit IV</fullName>
    </alternativeName>
    <alternativeName>
        <fullName>Cytochrome b-c1 complex subunit 4</fullName>
    </alternativeName>
    <alternativeName>
        <fullName>Ubiquinol-cytochrome-c reductase complex cytochrome c1 subunit</fullName>
        <shortName>Cytochrome c-1</shortName>
    </alternativeName>
</protein>
<comment type="function">
    <text evidence="1">Component of the ubiquinol-cytochrome c oxidoreductase, a multisubunit transmembrane complex that is part of the mitochondrial electron transport chain which drives oxidative phosphorylation. The respiratory chain contains 3 multisubunit complexes succinate dehydrogenase (complex II, CII), ubiquinol-cytochrome c oxidoreductase (cytochrome b-c1 complex, complex III, CIII) and cytochrome c oxidase (complex IV, CIV), that cooperate to transfer electrons derived from NADH and succinate to molecular oxygen, creating an electrochemical gradient over the inner membrane that drives transmembrane transport and the ATP synthase. The cytochrome b-c1 complex catalyzes electron transfer from ubiquinol to cytochrome c, linking this redox reaction to translocation of protons across the mitochondrial inner membrane, with protons being carried across the membrane as hydrogens on the quinol. In the process called Q cycle, 2 protons are consumed from the matrix, 4 protons are released into the intermembrane space and 2 electrons are passed to cytochrome c. Cytochrome c1 is a catalytic core subunit containing a c-type heme. It transfers electrons from the [2Fe-2S] iron-sulfur cluster of the Rieske protein to cytochrome c.</text>
</comment>
<comment type="catalytic activity">
    <reaction evidence="1">
        <text>a quinol + 2 Fe(III)-[cytochrome c](out) = a quinone + 2 Fe(II)-[cytochrome c](out) + 2 H(+)(out)</text>
        <dbReference type="Rhea" id="RHEA:11484"/>
        <dbReference type="Rhea" id="RHEA-COMP:10350"/>
        <dbReference type="Rhea" id="RHEA-COMP:14399"/>
        <dbReference type="ChEBI" id="CHEBI:15378"/>
        <dbReference type="ChEBI" id="CHEBI:24646"/>
        <dbReference type="ChEBI" id="CHEBI:29033"/>
        <dbReference type="ChEBI" id="CHEBI:29034"/>
        <dbReference type="ChEBI" id="CHEBI:132124"/>
        <dbReference type="EC" id="7.1.1.8"/>
    </reaction>
</comment>
<comment type="cofactor">
    <cofactor evidence="1">
        <name>heme c</name>
        <dbReference type="ChEBI" id="CHEBI:61717"/>
    </cofactor>
    <text evidence="1">Binds 1 heme c group covalently per subunit.</text>
</comment>
<comment type="subunit">
    <text evidence="1">Component of the ubiquinol-cytochrome c oxidoreductase (cytochrome b-c1 complex, complex III, CIII), a multisubunit enzyme composed of 3 respiratory subunits cytochrome b, cytochrome c1 and Rieske protein, 2 core protein subunits, and additional low-molecular weight protein subunits. The complex exists as an obligatory dimer and forms supercomplexes (SCs) in the inner mitochondrial membrane with cytochrome c oxidase (complex IV, CIV).</text>
</comment>
<comment type="subcellular location">
    <subcellularLocation>
        <location evidence="1">Mitochondrion inner membrane</location>
        <topology evidence="1">Single-pass membrane protein</topology>
    </subcellularLocation>
</comment>
<comment type="similarity">
    <text evidence="5">Belongs to the cytochrome c family.</text>
</comment>
<reference key="1">
    <citation type="journal article" date="1996" name="Curr. Genet.">
        <title>Isolation and molecular analysis of the gene for cytochrome c1 from Kluyveromyces lactis.</title>
        <authorList>
            <person name="Gbelska Y."/>
            <person name="Horvathova K."/>
            <person name="van der Aart Q.J.M."/>
            <person name="Zonneveld B."/>
            <person name="Steensma H.Y."/>
            <person name="Subik J."/>
        </authorList>
    </citation>
    <scope>NUCLEOTIDE SEQUENCE [GENOMIC DNA]</scope>
    <source>
        <strain>ATCC MYA-539 / JBD100</strain>
    </source>
</reference>
<reference key="2">
    <citation type="journal article" date="2004" name="Nature">
        <title>Genome evolution in yeasts.</title>
        <authorList>
            <person name="Dujon B."/>
            <person name="Sherman D."/>
            <person name="Fischer G."/>
            <person name="Durrens P."/>
            <person name="Casaregola S."/>
            <person name="Lafontaine I."/>
            <person name="de Montigny J."/>
            <person name="Marck C."/>
            <person name="Neuveglise C."/>
            <person name="Talla E."/>
            <person name="Goffard N."/>
            <person name="Frangeul L."/>
            <person name="Aigle M."/>
            <person name="Anthouard V."/>
            <person name="Babour A."/>
            <person name="Barbe V."/>
            <person name="Barnay S."/>
            <person name="Blanchin S."/>
            <person name="Beckerich J.-M."/>
            <person name="Beyne E."/>
            <person name="Bleykasten C."/>
            <person name="Boisrame A."/>
            <person name="Boyer J."/>
            <person name="Cattolico L."/>
            <person name="Confanioleri F."/>
            <person name="de Daruvar A."/>
            <person name="Despons L."/>
            <person name="Fabre E."/>
            <person name="Fairhead C."/>
            <person name="Ferry-Dumazet H."/>
            <person name="Groppi A."/>
            <person name="Hantraye F."/>
            <person name="Hennequin C."/>
            <person name="Jauniaux N."/>
            <person name="Joyet P."/>
            <person name="Kachouri R."/>
            <person name="Kerrest A."/>
            <person name="Koszul R."/>
            <person name="Lemaire M."/>
            <person name="Lesur I."/>
            <person name="Ma L."/>
            <person name="Muller H."/>
            <person name="Nicaud J.-M."/>
            <person name="Nikolski M."/>
            <person name="Oztas S."/>
            <person name="Ozier-Kalogeropoulos O."/>
            <person name="Pellenz S."/>
            <person name="Potier S."/>
            <person name="Richard G.-F."/>
            <person name="Straub M.-L."/>
            <person name="Suleau A."/>
            <person name="Swennen D."/>
            <person name="Tekaia F."/>
            <person name="Wesolowski-Louvel M."/>
            <person name="Westhof E."/>
            <person name="Wirth B."/>
            <person name="Zeniou-Meyer M."/>
            <person name="Zivanovic Y."/>
            <person name="Bolotin-Fukuhara M."/>
            <person name="Thierry A."/>
            <person name="Bouchier C."/>
            <person name="Caudron B."/>
            <person name="Scarpelli C."/>
            <person name="Gaillardin C."/>
            <person name="Weissenbach J."/>
            <person name="Wincker P."/>
            <person name="Souciet J.-L."/>
        </authorList>
    </citation>
    <scope>NUCLEOTIDE SEQUENCE [LARGE SCALE GENOMIC DNA]</scope>
    <source>
        <strain>ATCC 8585 / CBS 2359 / DSM 70799 / NBRC 1267 / NRRL Y-1140 / WM37</strain>
    </source>
</reference>
<name>CY1_KLULA</name>
<keyword id="KW-0249">Electron transport</keyword>
<keyword id="KW-0349">Heme</keyword>
<keyword id="KW-0408">Iron</keyword>
<keyword id="KW-0472">Membrane</keyword>
<keyword id="KW-0479">Metal-binding</keyword>
<keyword id="KW-0496">Mitochondrion</keyword>
<keyword id="KW-0999">Mitochondrion inner membrane</keyword>
<keyword id="KW-1185">Reference proteome</keyword>
<keyword id="KW-0679">Respiratory chain</keyword>
<keyword id="KW-0809">Transit peptide</keyword>
<keyword id="KW-1278">Translocase</keyword>
<keyword id="KW-0812">Transmembrane</keyword>
<keyword id="KW-1133">Transmembrane helix</keyword>
<keyword id="KW-0813">Transport</keyword>
<evidence type="ECO:0000250" key="1">
    <source>
        <dbReference type="UniProtKB" id="P07143"/>
    </source>
</evidence>
<evidence type="ECO:0000255" key="2"/>
<evidence type="ECO:0000255" key="3">
    <source>
        <dbReference type="PROSITE-ProRule" id="PRU00433"/>
    </source>
</evidence>
<evidence type="ECO:0000256" key="4">
    <source>
        <dbReference type="SAM" id="MobiDB-lite"/>
    </source>
</evidence>
<evidence type="ECO:0000305" key="5"/>
<accession>Q00988</accession>
<feature type="transit peptide" description="Mitochondrion" evidence="2">
    <location>
        <begin position="1"/>
        <end position="46"/>
    </location>
</feature>
<feature type="chain" id="PRO_0000006565" description="Cytochrome c1, heme protein, mitochondrial">
    <location>
        <begin position="47"/>
        <end position="292"/>
    </location>
</feature>
<feature type="topological domain" description="Mitochondrial intermembrane" evidence="1">
    <location>
        <begin position="47"/>
        <end position="253"/>
    </location>
</feature>
<feature type="transmembrane region" description="Helical" evidence="2">
    <location>
        <begin position="254"/>
        <end position="272"/>
    </location>
</feature>
<feature type="topological domain" description="Mitochondrial matrix" evidence="1">
    <location>
        <begin position="273"/>
        <end position="292"/>
    </location>
</feature>
<feature type="domain" description="Cytochrome c" evidence="3">
    <location>
        <begin position="73"/>
        <end position="226"/>
    </location>
</feature>
<feature type="region of interest" description="Disordered" evidence="4">
    <location>
        <begin position="117"/>
        <end position="137"/>
    </location>
</feature>
<feature type="binding site" description="covalent" evidence="1">
    <location>
        <position position="86"/>
    </location>
    <ligand>
        <name>heme c</name>
        <dbReference type="ChEBI" id="CHEBI:61717"/>
    </ligand>
</feature>
<feature type="binding site" description="covalent" evidence="1">
    <location>
        <position position="89"/>
    </location>
    <ligand>
        <name>heme c</name>
        <dbReference type="ChEBI" id="CHEBI:61717"/>
    </ligand>
</feature>
<feature type="binding site" description="axial binding residue" evidence="1">
    <location>
        <position position="90"/>
    </location>
    <ligand>
        <name>heme c</name>
        <dbReference type="ChEBI" id="CHEBI:61717"/>
    </ligand>
    <ligandPart>
        <name>Fe</name>
        <dbReference type="ChEBI" id="CHEBI:18248"/>
    </ligandPart>
</feature>
<feature type="binding site" description="axial binding residue" evidence="1">
    <location>
        <position position="210"/>
    </location>
    <ligand>
        <name>heme c</name>
        <dbReference type="ChEBI" id="CHEBI:61717"/>
    </ligand>
    <ligandPart>
        <name>Fe</name>
        <dbReference type="ChEBI" id="CHEBI:18248"/>
    </ligandPart>
</feature>